<feature type="chain" id="PRO_0000281872" description="Glycine N-acyltransferase">
    <location>
        <begin position="1"/>
        <end position="296"/>
    </location>
</feature>
<feature type="modified residue" description="N6-acetyllysine; alternate" evidence="2">
    <location>
        <position position="16"/>
    </location>
</feature>
<feature type="modified residue" description="N6-succinyllysine; alternate" evidence="2">
    <location>
        <position position="16"/>
    </location>
</feature>
<feature type="modified residue" description="N6-acetyllysine" evidence="2">
    <location>
        <position position="113"/>
    </location>
</feature>
<feature type="modified residue" description="N6-acetyllysine; alternate" evidence="2">
    <location>
        <position position="127"/>
    </location>
</feature>
<feature type="modified residue" description="N6-succinyllysine; alternate" evidence="2">
    <location>
        <position position="127"/>
    </location>
</feature>
<feature type="modified residue" description="N6-acetyllysine; alternate" evidence="2">
    <location>
        <position position="142"/>
    </location>
</feature>
<feature type="modified residue" description="N6-succinyllysine; alternate" evidence="2">
    <location>
        <position position="142"/>
    </location>
</feature>
<feature type="modified residue" description="N6-acetyllysine" evidence="2">
    <location>
        <position position="159"/>
    </location>
</feature>
<feature type="modified residue" description="N6-succinyllysine" evidence="2">
    <location>
        <position position="169"/>
    </location>
</feature>
<feature type="modified residue" description="N6-acetyllysine; alternate" evidence="2">
    <location>
        <position position="183"/>
    </location>
</feature>
<feature type="modified residue" description="N6-succinyllysine; alternate" evidence="2">
    <location>
        <position position="183"/>
    </location>
</feature>
<feature type="modified residue" description="N6-acetyllysine; alternate" evidence="2">
    <location>
        <position position="256"/>
    </location>
</feature>
<feature type="modified residue" description="N6-succinyllysine; alternate" evidence="2">
    <location>
        <position position="256"/>
    </location>
</feature>
<feature type="modified residue" description="N6-succinyllysine" evidence="2">
    <location>
        <position position="267"/>
    </location>
</feature>
<accession>Q5PQT3</accession>
<accession>Q7TP56</accession>
<organism>
    <name type="scientific">Rattus norvegicus</name>
    <name type="common">Rat</name>
    <dbReference type="NCBI Taxonomy" id="10116"/>
    <lineage>
        <taxon>Eukaryota</taxon>
        <taxon>Metazoa</taxon>
        <taxon>Chordata</taxon>
        <taxon>Craniata</taxon>
        <taxon>Vertebrata</taxon>
        <taxon>Euteleostomi</taxon>
        <taxon>Mammalia</taxon>
        <taxon>Eutheria</taxon>
        <taxon>Euarchontoglires</taxon>
        <taxon>Glires</taxon>
        <taxon>Rodentia</taxon>
        <taxon>Myomorpha</taxon>
        <taxon>Muroidea</taxon>
        <taxon>Muridae</taxon>
        <taxon>Murinae</taxon>
        <taxon>Rattus</taxon>
    </lineage>
</organism>
<gene>
    <name type="primary">Glyat</name>
    <name type="ORF">Ab2-132</name>
</gene>
<comment type="function">
    <text evidence="1">Mitochondrial acyltransferase which transfers an acyl group to the N-terminus of glycine and glutamine, although much less efficiently. Can conjugate a multitude of substrates to form a variety of N-acylglycines, thereby detoxify xenobiotics, such as benzoic acid or salicylic acid, and endogenous organic acids, such as isovaleric acid.</text>
</comment>
<comment type="catalytic activity">
    <reaction evidence="1">
        <text>an acyl-CoA + glycine = an N-acylglycine + CoA + H(+)</text>
        <dbReference type="Rhea" id="RHEA:19869"/>
        <dbReference type="ChEBI" id="CHEBI:15378"/>
        <dbReference type="ChEBI" id="CHEBI:57287"/>
        <dbReference type="ChEBI" id="CHEBI:57305"/>
        <dbReference type="ChEBI" id="CHEBI:57670"/>
        <dbReference type="ChEBI" id="CHEBI:58342"/>
        <dbReference type="EC" id="2.3.1.13"/>
    </reaction>
</comment>
<comment type="catalytic activity">
    <reaction evidence="1">
        <text>benzoyl-CoA + glycine = N-benzoylglycine + CoA + H(+)</text>
        <dbReference type="Rhea" id="RHEA:18493"/>
        <dbReference type="ChEBI" id="CHEBI:15378"/>
        <dbReference type="ChEBI" id="CHEBI:57287"/>
        <dbReference type="ChEBI" id="CHEBI:57305"/>
        <dbReference type="ChEBI" id="CHEBI:57369"/>
        <dbReference type="ChEBI" id="CHEBI:606565"/>
        <dbReference type="EC" id="2.3.1.71"/>
    </reaction>
</comment>
<comment type="subcellular location">
    <subcellularLocation>
        <location evidence="1">Mitochondrion</location>
    </subcellularLocation>
</comment>
<comment type="similarity">
    <text evidence="3">Belongs to the glycine N-acyltransferase family.</text>
</comment>
<comment type="sequence caution" evidence="3">
    <conflict type="miscellaneous discrepancy">
        <sequence resource="EMBL-CDS" id="AAP92593"/>
    </conflict>
    <text>Intron retention.</text>
</comment>
<sequence>MIVPLQGAQMLQMLEKSLKKYLPESLKVYGTIYHVNHGNPFNLKALVDKWPDFNTVVVRPQEQEMKDDLDFYTNTYQIYSKDPENCQEFLGSSEVINWKQHLQIQSSQSHLNKAIQNLASIHSLQVKHSENILYVVSETVRKLFPSLLDTKNLSPGSGKPKAINQEMFKLSSLDVTHAALVNKFWLFGGNERSQRFIERCIKNFPSSCVLGPEGTPASWTLMDQTGEMRMGGTVPQYRAQGLVSFVIYSQDQIMKKRGFPVYSHTDKSNTVMQKMSYSLQHLPMPCAWNQWICVPM</sequence>
<dbReference type="EC" id="2.3.1.13" evidence="1"/>
<dbReference type="EC" id="2.3.1.71" evidence="1"/>
<dbReference type="EMBL" id="AY325192">
    <property type="protein sequence ID" value="AAP92593.1"/>
    <property type="status" value="ALT_SEQ"/>
    <property type="molecule type" value="mRNA"/>
</dbReference>
<dbReference type="EMBL" id="BC087043">
    <property type="protein sequence ID" value="AAH87043.1"/>
    <property type="molecule type" value="mRNA"/>
</dbReference>
<dbReference type="RefSeq" id="NP_001009648.1">
    <property type="nucleotide sequence ID" value="NM_001009648.3"/>
</dbReference>
<dbReference type="RefSeq" id="NP_001399482.1">
    <property type="nucleotide sequence ID" value="NM_001412553.1"/>
</dbReference>
<dbReference type="RefSeq" id="XP_006231183.1">
    <property type="nucleotide sequence ID" value="XM_006231121.3"/>
</dbReference>
<dbReference type="RefSeq" id="XP_006231184.1">
    <property type="nucleotide sequence ID" value="XM_006231122.3"/>
</dbReference>
<dbReference type="RefSeq" id="XP_006231185.1">
    <property type="nucleotide sequence ID" value="XM_006231123.3"/>
</dbReference>
<dbReference type="RefSeq" id="XP_008758479.1">
    <property type="nucleotide sequence ID" value="XM_008760257.1"/>
</dbReference>
<dbReference type="RefSeq" id="XP_017444517.1">
    <property type="nucleotide sequence ID" value="XM_017589028.1"/>
</dbReference>
<dbReference type="RefSeq" id="XP_063143048.1">
    <property type="nucleotide sequence ID" value="XM_063286978.1"/>
</dbReference>
<dbReference type="RefSeq" id="XP_063143049.1">
    <property type="nucleotide sequence ID" value="XM_063286979.1"/>
</dbReference>
<dbReference type="RefSeq" id="XP_063143050.1">
    <property type="nucleotide sequence ID" value="XM_063286980.1"/>
</dbReference>
<dbReference type="RefSeq" id="XP_063143052.1">
    <property type="nucleotide sequence ID" value="XM_063286982.1"/>
</dbReference>
<dbReference type="SMR" id="Q5PQT3"/>
<dbReference type="FunCoup" id="Q5PQT3">
    <property type="interactions" value="6"/>
</dbReference>
<dbReference type="STRING" id="10116.ENSRNOP00000069894"/>
<dbReference type="GlyGen" id="Q5PQT3">
    <property type="glycosylation" value="1 site"/>
</dbReference>
<dbReference type="iPTMnet" id="Q5PQT3"/>
<dbReference type="PhosphoSitePlus" id="Q5PQT3"/>
<dbReference type="PaxDb" id="10116-ENSRNOP00000016454"/>
<dbReference type="Ensembl" id="ENSRNOT00000016454.6">
    <property type="protein sequence ID" value="ENSRNOP00000016454.3"/>
    <property type="gene ID" value="ENSRNOG00000012142.7"/>
</dbReference>
<dbReference type="GeneID" id="293779"/>
<dbReference type="KEGG" id="rno:293779"/>
<dbReference type="UCSC" id="RGD:1307163">
    <property type="organism name" value="rat"/>
</dbReference>
<dbReference type="AGR" id="RGD:1307163"/>
<dbReference type="CTD" id="10249"/>
<dbReference type="RGD" id="1307163">
    <property type="gene designation" value="Glyat"/>
</dbReference>
<dbReference type="eggNOG" id="ENOG502SDQB">
    <property type="taxonomic scope" value="Eukaryota"/>
</dbReference>
<dbReference type="GeneTree" id="ENSGT00950000183133"/>
<dbReference type="HOGENOM" id="CLU_060336_0_0_1"/>
<dbReference type="InParanoid" id="Q5PQT3"/>
<dbReference type="PhylomeDB" id="Q5PQT3"/>
<dbReference type="TreeFam" id="TF353258"/>
<dbReference type="Reactome" id="R-RNO-177128">
    <property type="pathway name" value="Conjugation of salicylate with glycine"/>
</dbReference>
<dbReference type="Reactome" id="R-RNO-177135">
    <property type="pathway name" value="Conjugation of benzoate with glycine"/>
</dbReference>
<dbReference type="Reactome" id="R-RNO-9749641">
    <property type="pathway name" value="Aspirin ADME"/>
</dbReference>
<dbReference type="PRO" id="PR:Q5PQT3"/>
<dbReference type="Proteomes" id="UP000002494">
    <property type="component" value="Chromosome 1"/>
</dbReference>
<dbReference type="Bgee" id="ENSRNOG00000012142">
    <property type="expression patterns" value="Expressed in adult mammalian kidney and 12 other cell types or tissues"/>
</dbReference>
<dbReference type="ExpressionAtlas" id="Q5PQT3">
    <property type="expression patterns" value="baseline and differential"/>
</dbReference>
<dbReference type="GO" id="GO:0005739">
    <property type="term" value="C:mitochondrion"/>
    <property type="evidence" value="ECO:0000250"/>
    <property type="project" value="UniProtKB"/>
</dbReference>
<dbReference type="GO" id="GO:0047961">
    <property type="term" value="F:glycine N-acyltransferase activity"/>
    <property type="evidence" value="ECO:0000266"/>
    <property type="project" value="RGD"/>
</dbReference>
<dbReference type="GO" id="GO:0047962">
    <property type="term" value="F:glycine N-benzoyltransferase activity"/>
    <property type="evidence" value="ECO:0000250"/>
    <property type="project" value="UniProtKB"/>
</dbReference>
<dbReference type="GO" id="GO:1901787">
    <property type="term" value="P:benzoyl-CoA metabolic process"/>
    <property type="evidence" value="ECO:0000266"/>
    <property type="project" value="RGD"/>
</dbReference>
<dbReference type="GO" id="GO:0006544">
    <property type="term" value="P:glycine metabolic process"/>
    <property type="evidence" value="ECO:0000250"/>
    <property type="project" value="UniProtKB"/>
</dbReference>
<dbReference type="GO" id="GO:0032787">
    <property type="term" value="P:monocarboxylic acid metabolic process"/>
    <property type="evidence" value="ECO:0000250"/>
    <property type="project" value="UniProtKB"/>
</dbReference>
<dbReference type="GO" id="GO:0009636">
    <property type="term" value="P:response to toxic substance"/>
    <property type="evidence" value="ECO:0007669"/>
    <property type="project" value="UniProtKB-KW"/>
</dbReference>
<dbReference type="FunFam" id="3.40.630.30:FF:000075">
    <property type="entry name" value="Glycine N-acyltransferase"/>
    <property type="match status" value="1"/>
</dbReference>
<dbReference type="Gene3D" id="3.40.630.30">
    <property type="match status" value="1"/>
</dbReference>
<dbReference type="InterPro" id="IPR016181">
    <property type="entry name" value="Acyl_CoA_acyltransferase"/>
</dbReference>
<dbReference type="InterPro" id="IPR010313">
    <property type="entry name" value="Glycine_N-acyltransferase"/>
</dbReference>
<dbReference type="InterPro" id="IPR013652">
    <property type="entry name" value="Glycine_N-acyltransferase_C"/>
</dbReference>
<dbReference type="InterPro" id="IPR015938">
    <property type="entry name" value="Glycine_N-acyltransferase_N"/>
</dbReference>
<dbReference type="PANTHER" id="PTHR15298:SF9">
    <property type="entry name" value="GLYCINE N-ACYLTRANSFERASE"/>
    <property type="match status" value="1"/>
</dbReference>
<dbReference type="PANTHER" id="PTHR15298">
    <property type="entry name" value="L-COA N-ACYLTRANSFERASE-RELATED"/>
    <property type="match status" value="1"/>
</dbReference>
<dbReference type="Pfam" id="PF08444">
    <property type="entry name" value="Gly_acyl_tr_C"/>
    <property type="match status" value="1"/>
</dbReference>
<dbReference type="Pfam" id="PF06021">
    <property type="entry name" value="Gly_acyl_tr_N"/>
    <property type="match status" value="1"/>
</dbReference>
<dbReference type="SUPFAM" id="SSF55729">
    <property type="entry name" value="Acyl-CoA N-acyltransferases (Nat)"/>
    <property type="match status" value="1"/>
</dbReference>
<protein>
    <recommendedName>
        <fullName>Glycine N-acyltransferase</fullName>
        <ecNumber evidence="1">2.3.1.13</ecNumber>
    </recommendedName>
    <alternativeName>
        <fullName>Acyl-CoA:glycine N-acyltransferase</fullName>
        <shortName>AAc</shortName>
    </alternativeName>
    <alternativeName>
        <fullName>Aralkyl acyl-CoA N-acyltransferase</fullName>
    </alternativeName>
    <alternativeName>
        <fullName>Aralkyl acyl-CoA:amino acid N-acyltransferase</fullName>
    </alternativeName>
    <alternativeName>
        <fullName>Benzoyl-coenzyme A:glycine N-acyltransferase</fullName>
    </alternativeName>
    <alternativeName>
        <fullName>Glycine N-benzoyltransferase</fullName>
        <ecNumber evidence="1">2.3.1.71</ecNumber>
    </alternativeName>
    <alternativeName>
        <fullName>Liver regeneration-related protein LRRG067</fullName>
    </alternativeName>
</protein>
<name>GLYAT_RAT</name>
<keyword id="KW-0007">Acetylation</keyword>
<keyword id="KW-0012">Acyltransferase</keyword>
<keyword id="KW-0216">Detoxification</keyword>
<keyword id="KW-0496">Mitochondrion</keyword>
<keyword id="KW-1185">Reference proteome</keyword>
<keyword id="KW-0808">Transferase</keyword>
<proteinExistence type="evidence at transcript level"/>
<evidence type="ECO:0000250" key="1">
    <source>
        <dbReference type="UniProtKB" id="Q6IB77"/>
    </source>
</evidence>
<evidence type="ECO:0000250" key="2">
    <source>
        <dbReference type="UniProtKB" id="Q91XE0"/>
    </source>
</evidence>
<evidence type="ECO:0000305" key="3"/>
<reference key="1">
    <citation type="submission" date="2003-06" db="EMBL/GenBank/DDBJ databases">
        <title>Liver regeneration after PH.</title>
        <authorList>
            <person name="Xu C.S."/>
            <person name="Chang C.F."/>
            <person name="Han H.P."/>
            <person name="Wang G.P."/>
            <person name="Chai L.Q."/>
            <person name="Yuan J.Y."/>
            <person name="Yang K.J."/>
            <person name="Zhao L.F."/>
            <person name="Ma H."/>
            <person name="Wang L."/>
            <person name="Wang S.F."/>
            <person name="Xing X.K."/>
            <person name="Shen G.M."/>
            <person name="Shi J.B."/>
            <person name="Rahman S."/>
            <person name="Wang Q.N."/>
            <person name="Zhang J.B."/>
        </authorList>
    </citation>
    <scope>NUCLEOTIDE SEQUENCE [LARGE SCALE MRNA]</scope>
    <source>
        <strain>Sprague-Dawley</strain>
        <tissue>Liver</tissue>
    </source>
</reference>
<reference key="2">
    <citation type="journal article" date="2004" name="Genome Res.">
        <title>The status, quality, and expansion of the NIH full-length cDNA project: the Mammalian Gene Collection (MGC).</title>
        <authorList>
            <consortium name="The MGC Project Team"/>
        </authorList>
    </citation>
    <scope>NUCLEOTIDE SEQUENCE [LARGE SCALE MRNA]</scope>
    <source>
        <tissue>Kidney</tissue>
    </source>
</reference>